<comment type="function">
    <text evidence="1">Could be a nuclease involved in processing of the 5'-end of pre-16S rRNA.</text>
</comment>
<comment type="subcellular location">
    <subcellularLocation>
        <location evidence="1">Cytoplasm</location>
    </subcellularLocation>
</comment>
<comment type="similarity">
    <text evidence="1">Belongs to the YqgF nuclease family.</text>
</comment>
<organism>
    <name type="scientific">Yersinia pestis (strain Pestoides F)</name>
    <dbReference type="NCBI Taxonomy" id="386656"/>
    <lineage>
        <taxon>Bacteria</taxon>
        <taxon>Pseudomonadati</taxon>
        <taxon>Pseudomonadota</taxon>
        <taxon>Gammaproteobacteria</taxon>
        <taxon>Enterobacterales</taxon>
        <taxon>Yersiniaceae</taxon>
        <taxon>Yersinia</taxon>
    </lineage>
</organism>
<proteinExistence type="inferred from homology"/>
<sequence length="140" mass="15316">MANRTIIAFDFGTKSIGVAIGQEVTGTARALTAFKAQDGTPDWQQVEKLLKEWQPNLVVVGLPLNMDGTEQPLTARARRFANRLHGRFGVQVALQDERLSTVEARANLFDRGGYRALDKGSVDAASAVIILESWFDEQAG</sequence>
<name>YQGF_YERPP</name>
<reference key="1">
    <citation type="submission" date="2007-02" db="EMBL/GenBank/DDBJ databases">
        <title>Complete sequence of chromosome of Yersinia pestis Pestoides F.</title>
        <authorList>
            <consortium name="US DOE Joint Genome Institute"/>
            <person name="Copeland A."/>
            <person name="Lucas S."/>
            <person name="Lapidus A."/>
            <person name="Barry K."/>
            <person name="Detter J.C."/>
            <person name="Glavina del Rio T."/>
            <person name="Hammon N."/>
            <person name="Israni S."/>
            <person name="Dalin E."/>
            <person name="Tice H."/>
            <person name="Pitluck S."/>
            <person name="Di Bartolo G."/>
            <person name="Chain P."/>
            <person name="Malfatti S."/>
            <person name="Shin M."/>
            <person name="Vergez L."/>
            <person name="Schmutz J."/>
            <person name="Larimer F."/>
            <person name="Land M."/>
            <person name="Hauser L."/>
            <person name="Worsham P."/>
            <person name="Chu M."/>
            <person name="Bearden S."/>
            <person name="Garcia E."/>
            <person name="Richardson P."/>
        </authorList>
    </citation>
    <scope>NUCLEOTIDE SEQUENCE [LARGE SCALE GENOMIC DNA]</scope>
    <source>
        <strain>Pestoides F</strain>
    </source>
</reference>
<protein>
    <recommendedName>
        <fullName evidence="1">Putative pre-16S rRNA nuclease</fullName>
        <ecNumber evidence="1">3.1.-.-</ecNumber>
    </recommendedName>
</protein>
<feature type="chain" id="PRO_1000061580" description="Putative pre-16S rRNA nuclease">
    <location>
        <begin position="1"/>
        <end position="140"/>
    </location>
</feature>
<dbReference type="EC" id="3.1.-.-" evidence="1"/>
<dbReference type="EMBL" id="CP000668">
    <property type="protein sequence ID" value="ABP38988.1"/>
    <property type="molecule type" value="Genomic_DNA"/>
</dbReference>
<dbReference type="SMR" id="A4TI76"/>
<dbReference type="KEGG" id="ypp:YPDSF_0578"/>
<dbReference type="PATRIC" id="fig|386656.14.peg.1896"/>
<dbReference type="GO" id="GO:0005829">
    <property type="term" value="C:cytosol"/>
    <property type="evidence" value="ECO:0007669"/>
    <property type="project" value="TreeGrafter"/>
</dbReference>
<dbReference type="GO" id="GO:0004518">
    <property type="term" value="F:nuclease activity"/>
    <property type="evidence" value="ECO:0007669"/>
    <property type="project" value="UniProtKB-KW"/>
</dbReference>
<dbReference type="GO" id="GO:0000967">
    <property type="term" value="P:rRNA 5'-end processing"/>
    <property type="evidence" value="ECO:0007669"/>
    <property type="project" value="UniProtKB-UniRule"/>
</dbReference>
<dbReference type="CDD" id="cd16964">
    <property type="entry name" value="YqgF"/>
    <property type="match status" value="1"/>
</dbReference>
<dbReference type="FunFam" id="3.30.420.140:FF:000002">
    <property type="entry name" value="Putative pre-16S rRNA nuclease"/>
    <property type="match status" value="1"/>
</dbReference>
<dbReference type="Gene3D" id="3.30.420.140">
    <property type="entry name" value="YqgF/RNase H-like domain"/>
    <property type="match status" value="1"/>
</dbReference>
<dbReference type="HAMAP" id="MF_00651">
    <property type="entry name" value="Nuclease_YqgF"/>
    <property type="match status" value="1"/>
</dbReference>
<dbReference type="InterPro" id="IPR012337">
    <property type="entry name" value="RNaseH-like_sf"/>
</dbReference>
<dbReference type="InterPro" id="IPR005227">
    <property type="entry name" value="YqgF"/>
</dbReference>
<dbReference type="InterPro" id="IPR006641">
    <property type="entry name" value="YqgF/RNaseH-like_dom"/>
</dbReference>
<dbReference type="InterPro" id="IPR037027">
    <property type="entry name" value="YqgF/RNaseH-like_dom_sf"/>
</dbReference>
<dbReference type="NCBIfam" id="TIGR00250">
    <property type="entry name" value="RNAse_H_YqgF"/>
    <property type="match status" value="1"/>
</dbReference>
<dbReference type="PANTHER" id="PTHR33317">
    <property type="entry name" value="POLYNUCLEOTIDYL TRANSFERASE, RIBONUCLEASE H-LIKE SUPERFAMILY PROTEIN"/>
    <property type="match status" value="1"/>
</dbReference>
<dbReference type="PANTHER" id="PTHR33317:SF4">
    <property type="entry name" value="POLYNUCLEOTIDYL TRANSFERASE, RIBONUCLEASE H-LIKE SUPERFAMILY PROTEIN"/>
    <property type="match status" value="1"/>
</dbReference>
<dbReference type="Pfam" id="PF03652">
    <property type="entry name" value="RuvX"/>
    <property type="match status" value="1"/>
</dbReference>
<dbReference type="SMART" id="SM00732">
    <property type="entry name" value="YqgFc"/>
    <property type="match status" value="1"/>
</dbReference>
<dbReference type="SUPFAM" id="SSF53098">
    <property type="entry name" value="Ribonuclease H-like"/>
    <property type="match status" value="1"/>
</dbReference>
<gene>
    <name evidence="1" type="primary">yqgF</name>
    <name type="ordered locus">YPDSF_0578</name>
</gene>
<evidence type="ECO:0000255" key="1">
    <source>
        <dbReference type="HAMAP-Rule" id="MF_00651"/>
    </source>
</evidence>
<keyword id="KW-0963">Cytoplasm</keyword>
<keyword id="KW-0378">Hydrolase</keyword>
<keyword id="KW-0540">Nuclease</keyword>
<keyword id="KW-0690">Ribosome biogenesis</keyword>
<accession>A4TI76</accession>